<reference key="1">
    <citation type="journal article" date="2000" name="Nature">
        <title>Complete genome sequence of Pseudomonas aeruginosa PAO1, an opportunistic pathogen.</title>
        <authorList>
            <person name="Stover C.K."/>
            <person name="Pham X.-Q.T."/>
            <person name="Erwin A.L."/>
            <person name="Mizoguchi S.D."/>
            <person name="Warrener P."/>
            <person name="Hickey M.J."/>
            <person name="Brinkman F.S.L."/>
            <person name="Hufnagle W.O."/>
            <person name="Kowalik D.J."/>
            <person name="Lagrou M."/>
            <person name="Garber R.L."/>
            <person name="Goltry L."/>
            <person name="Tolentino E."/>
            <person name="Westbrock-Wadman S."/>
            <person name="Yuan Y."/>
            <person name="Brody L.L."/>
            <person name="Coulter S.N."/>
            <person name="Folger K.R."/>
            <person name="Kas A."/>
            <person name="Larbig K."/>
            <person name="Lim R.M."/>
            <person name="Smith K.A."/>
            <person name="Spencer D.H."/>
            <person name="Wong G.K.-S."/>
            <person name="Wu Z."/>
            <person name="Paulsen I.T."/>
            <person name="Reizer J."/>
            <person name="Saier M.H. Jr."/>
            <person name="Hancock R.E.W."/>
            <person name="Lory S."/>
            <person name="Olson M.V."/>
        </authorList>
    </citation>
    <scope>NUCLEOTIDE SEQUENCE [LARGE SCALE GENOMIC DNA]</scope>
    <source>
        <strain>ATCC 15692 / DSM 22644 / CIP 104116 / JCM 14847 / LMG 12228 / 1C / PRS 101 / PAO1</strain>
    </source>
</reference>
<reference key="2">
    <citation type="submission" date="2009-02" db="PDB data bank">
        <title>Comparative modeling for protein structure prediction of undecaprenyl pyrophosphate synthetase upps form pseudomonas aeruginosa.</title>
        <authorList>
            <person name="Guo R.T."/>
            <person name="Kuo C.J."/>
            <person name="Chen C.L."/>
            <person name="Ko T.P."/>
            <person name="Liang P.H."/>
            <person name="Wang A.H.-J."/>
        </authorList>
    </citation>
    <scope>THEORETICAL MODEL</scope>
</reference>
<comment type="function">
    <text evidence="1">Catalyzes the sequential condensation of isopentenyl diphosphate (IPP) with (2E,6E)-farnesyl diphosphate (E,E-FPP) to yield (2Z,6Z,10Z,14Z,18Z,22Z,26Z,30Z,34E,38E)-undecaprenyl diphosphate (di-trans,octa-cis-UPP). UPP is the precursor of glycosyl carrier lipid in the biosynthesis of bacterial cell wall polysaccharide components such as peptidoglycan and lipopolysaccharide.</text>
</comment>
<comment type="catalytic activity">
    <reaction evidence="1">
        <text>8 isopentenyl diphosphate + (2E,6E)-farnesyl diphosphate = di-trans,octa-cis-undecaprenyl diphosphate + 8 diphosphate</text>
        <dbReference type="Rhea" id="RHEA:27551"/>
        <dbReference type="ChEBI" id="CHEBI:33019"/>
        <dbReference type="ChEBI" id="CHEBI:58405"/>
        <dbReference type="ChEBI" id="CHEBI:128769"/>
        <dbReference type="ChEBI" id="CHEBI:175763"/>
        <dbReference type="EC" id="2.5.1.31"/>
    </reaction>
</comment>
<comment type="cofactor">
    <cofactor evidence="1">
        <name>Mg(2+)</name>
        <dbReference type="ChEBI" id="CHEBI:18420"/>
    </cofactor>
    <text evidence="1">Binds 2 magnesium ions per subunit.</text>
</comment>
<comment type="subunit">
    <text evidence="1">Homodimer.</text>
</comment>
<comment type="similarity">
    <text evidence="1">Belongs to the UPP synthase family.</text>
</comment>
<proteinExistence type="inferred from homology"/>
<accession>Q9HXY2</accession>
<keyword id="KW-0133">Cell shape</keyword>
<keyword id="KW-0961">Cell wall biogenesis/degradation</keyword>
<keyword id="KW-0460">Magnesium</keyword>
<keyword id="KW-0479">Metal-binding</keyword>
<keyword id="KW-0573">Peptidoglycan synthesis</keyword>
<keyword id="KW-1185">Reference proteome</keyword>
<keyword id="KW-0808">Transferase</keyword>
<gene>
    <name evidence="1" type="primary">uppS</name>
    <name type="ordered locus">PA3652</name>
</gene>
<sequence length="251" mass="28040">MEKTRKDVCVPRHVAIIMDGNNRWAKKRLLPGVAGHKAGVDAVRAVIEVCAEAGVEVLTLFAFSSENWQRPADEVSALMELFLVALRREVRKLDENGIRLRIIGDRTRFHPELQAAMREAEAATAGNTRFLLQVAANYGGQWDIVQAAQRLAREVQGGHLAADDISAELLQGCLVTGDQPLPDLCIRTGGEHRISNFLLWQLAYAELYFSDLFWPDFKHAAMRAALADFSKRQRRFGKTSEQVEAEARPSC</sequence>
<organism>
    <name type="scientific">Pseudomonas aeruginosa (strain ATCC 15692 / DSM 22644 / CIP 104116 / JCM 14847 / LMG 12228 / 1C / PRS 101 / PAO1)</name>
    <dbReference type="NCBI Taxonomy" id="208964"/>
    <lineage>
        <taxon>Bacteria</taxon>
        <taxon>Pseudomonadati</taxon>
        <taxon>Pseudomonadota</taxon>
        <taxon>Gammaproteobacteria</taxon>
        <taxon>Pseudomonadales</taxon>
        <taxon>Pseudomonadaceae</taxon>
        <taxon>Pseudomonas</taxon>
    </lineage>
</organism>
<feature type="chain" id="PRO_0000123654" description="Ditrans,polycis-undecaprenyl-diphosphate synthase ((2E,6E)-farnesyl-diphosphate specific)">
    <location>
        <begin position="1"/>
        <end position="251"/>
    </location>
</feature>
<feature type="active site" evidence="1">
    <location>
        <position position="19"/>
    </location>
</feature>
<feature type="active site" description="Proton acceptor" evidence="1">
    <location>
        <position position="67"/>
    </location>
</feature>
<feature type="binding site" evidence="1">
    <location>
        <position position="19"/>
    </location>
    <ligand>
        <name>Mg(2+)</name>
        <dbReference type="ChEBI" id="CHEBI:18420"/>
    </ligand>
</feature>
<feature type="binding site" evidence="1">
    <location>
        <begin position="20"/>
        <end position="23"/>
    </location>
    <ligand>
        <name>substrate</name>
    </ligand>
</feature>
<feature type="binding site" evidence="1">
    <location>
        <position position="24"/>
    </location>
    <ligand>
        <name>substrate</name>
    </ligand>
</feature>
<feature type="binding site" evidence="1">
    <location>
        <position position="36"/>
    </location>
    <ligand>
        <name>substrate</name>
    </ligand>
</feature>
<feature type="binding site" evidence="1">
    <location>
        <begin position="64"/>
        <end position="66"/>
    </location>
    <ligand>
        <name>substrate</name>
    </ligand>
</feature>
<feature type="binding site" evidence="1">
    <location>
        <position position="68"/>
    </location>
    <ligand>
        <name>substrate</name>
    </ligand>
</feature>
<feature type="binding site" evidence="1">
    <location>
        <position position="70"/>
    </location>
    <ligand>
        <name>substrate</name>
    </ligand>
</feature>
<feature type="binding site" evidence="1">
    <location>
        <position position="187"/>
    </location>
    <ligand>
        <name>substrate</name>
    </ligand>
</feature>
<feature type="binding site" evidence="1">
    <location>
        <begin position="193"/>
        <end position="195"/>
    </location>
    <ligand>
        <name>substrate</name>
    </ligand>
</feature>
<feature type="binding site" evidence="1">
    <location>
        <position position="206"/>
    </location>
    <ligand>
        <name>Mg(2+)</name>
        <dbReference type="ChEBI" id="CHEBI:18420"/>
    </ligand>
</feature>
<dbReference type="EC" id="2.5.1.31" evidence="1"/>
<dbReference type="EMBL" id="AE004091">
    <property type="protein sequence ID" value="AAG07040.1"/>
    <property type="molecule type" value="Genomic_DNA"/>
</dbReference>
<dbReference type="PIR" id="G83188">
    <property type="entry name" value="G83188"/>
</dbReference>
<dbReference type="RefSeq" id="NP_252342.1">
    <property type="nucleotide sequence ID" value="NC_002516.2"/>
</dbReference>
<dbReference type="RefSeq" id="WP_003113863.1">
    <property type="nucleotide sequence ID" value="NZ_QZGE01000001.1"/>
</dbReference>
<dbReference type="SMR" id="Q9HXY2"/>
<dbReference type="FunCoup" id="Q9HXY2">
    <property type="interactions" value="620"/>
</dbReference>
<dbReference type="STRING" id="208964.PA3652"/>
<dbReference type="BindingDB" id="Q9HXY2"/>
<dbReference type="ChEMBL" id="CHEMBL4523935"/>
<dbReference type="PaxDb" id="208964-PA3652"/>
<dbReference type="GeneID" id="77219867"/>
<dbReference type="GeneID" id="880553"/>
<dbReference type="KEGG" id="pae:PA3652"/>
<dbReference type="PATRIC" id="fig|208964.12.peg.3821"/>
<dbReference type="PseudoCAP" id="PA3652"/>
<dbReference type="HOGENOM" id="CLU_038505_1_1_6"/>
<dbReference type="InParanoid" id="Q9HXY2"/>
<dbReference type="OrthoDB" id="4191603at2"/>
<dbReference type="PhylomeDB" id="Q9HXY2"/>
<dbReference type="BioCyc" id="PAER208964:G1FZ6-3722-MONOMER"/>
<dbReference type="Proteomes" id="UP000002438">
    <property type="component" value="Chromosome"/>
</dbReference>
<dbReference type="GO" id="GO:0005829">
    <property type="term" value="C:cytosol"/>
    <property type="evidence" value="ECO:0000318"/>
    <property type="project" value="GO_Central"/>
</dbReference>
<dbReference type="GO" id="GO:0008834">
    <property type="term" value="F:ditrans,polycis-undecaprenyl-diphosphate synthase [(2E,6E)-farnesyl-diphosphate specific] activity"/>
    <property type="evidence" value="ECO:0000318"/>
    <property type="project" value="GO_Central"/>
</dbReference>
<dbReference type="GO" id="GO:0000287">
    <property type="term" value="F:magnesium ion binding"/>
    <property type="evidence" value="ECO:0000318"/>
    <property type="project" value="GO_Central"/>
</dbReference>
<dbReference type="GO" id="GO:0071555">
    <property type="term" value="P:cell wall organization"/>
    <property type="evidence" value="ECO:0007669"/>
    <property type="project" value="UniProtKB-KW"/>
</dbReference>
<dbReference type="GO" id="GO:0009252">
    <property type="term" value="P:peptidoglycan biosynthetic process"/>
    <property type="evidence" value="ECO:0007669"/>
    <property type="project" value="UniProtKB-UniRule"/>
</dbReference>
<dbReference type="GO" id="GO:0016094">
    <property type="term" value="P:polyprenol biosynthetic process"/>
    <property type="evidence" value="ECO:0000318"/>
    <property type="project" value="GO_Central"/>
</dbReference>
<dbReference type="GO" id="GO:0008360">
    <property type="term" value="P:regulation of cell shape"/>
    <property type="evidence" value="ECO:0007669"/>
    <property type="project" value="UniProtKB-KW"/>
</dbReference>
<dbReference type="CDD" id="cd00475">
    <property type="entry name" value="Cis_IPPS"/>
    <property type="match status" value="1"/>
</dbReference>
<dbReference type="FunFam" id="3.40.1180.10:FF:000001">
    <property type="entry name" value="(2E,6E)-farnesyl-diphosphate-specific ditrans,polycis-undecaprenyl-diphosphate synthase"/>
    <property type="match status" value="1"/>
</dbReference>
<dbReference type="Gene3D" id="3.40.1180.10">
    <property type="entry name" value="Decaprenyl diphosphate synthase-like"/>
    <property type="match status" value="1"/>
</dbReference>
<dbReference type="HAMAP" id="MF_01139">
    <property type="entry name" value="ISPT"/>
    <property type="match status" value="1"/>
</dbReference>
<dbReference type="InterPro" id="IPR001441">
    <property type="entry name" value="UPP_synth-like"/>
</dbReference>
<dbReference type="InterPro" id="IPR018520">
    <property type="entry name" value="UPP_synth-like_CS"/>
</dbReference>
<dbReference type="InterPro" id="IPR036424">
    <property type="entry name" value="UPP_synth-like_sf"/>
</dbReference>
<dbReference type="NCBIfam" id="TIGR00055">
    <property type="entry name" value="uppS"/>
    <property type="match status" value="1"/>
</dbReference>
<dbReference type="PANTHER" id="PTHR10291:SF0">
    <property type="entry name" value="DEHYDRODOLICHYL DIPHOSPHATE SYNTHASE 2"/>
    <property type="match status" value="1"/>
</dbReference>
<dbReference type="PANTHER" id="PTHR10291">
    <property type="entry name" value="DEHYDRODOLICHYL DIPHOSPHATE SYNTHASE FAMILY MEMBER"/>
    <property type="match status" value="1"/>
</dbReference>
<dbReference type="Pfam" id="PF01255">
    <property type="entry name" value="Prenyltransf"/>
    <property type="match status" value="1"/>
</dbReference>
<dbReference type="SUPFAM" id="SSF64005">
    <property type="entry name" value="Undecaprenyl diphosphate synthase"/>
    <property type="match status" value="1"/>
</dbReference>
<dbReference type="PROSITE" id="PS01066">
    <property type="entry name" value="UPP_SYNTHASE"/>
    <property type="match status" value="1"/>
</dbReference>
<protein>
    <recommendedName>
        <fullName evidence="1">Ditrans,polycis-undecaprenyl-diphosphate synthase ((2E,6E)-farnesyl-diphosphate specific)</fullName>
        <ecNumber evidence="1">2.5.1.31</ecNumber>
    </recommendedName>
    <alternativeName>
        <fullName evidence="1">Ditrans,polycis-undecaprenylcistransferase</fullName>
    </alternativeName>
    <alternativeName>
        <fullName evidence="1">Undecaprenyl diphosphate synthase</fullName>
        <shortName evidence="1">UDS</shortName>
    </alternativeName>
    <alternativeName>
        <fullName evidence="1">Undecaprenyl pyrophosphate synthase</fullName>
        <shortName evidence="1">UPP synthase</shortName>
    </alternativeName>
</protein>
<name>UPPS_PSEAE</name>
<evidence type="ECO:0000255" key="1">
    <source>
        <dbReference type="HAMAP-Rule" id="MF_01139"/>
    </source>
</evidence>